<name>DEOD_ECO81</name>
<evidence type="ECO:0000250" key="1">
    <source>
        <dbReference type="UniProtKB" id="P50389"/>
    </source>
</evidence>
<evidence type="ECO:0000255" key="2">
    <source>
        <dbReference type="HAMAP-Rule" id="MF_01627"/>
    </source>
</evidence>
<dbReference type="EC" id="2.4.2.1" evidence="2"/>
<dbReference type="EMBL" id="CU928162">
    <property type="protein sequence ID" value="CAV18213.1"/>
    <property type="molecule type" value="Genomic_DNA"/>
</dbReference>
<dbReference type="RefSeq" id="WP_000224879.1">
    <property type="nucleotide sequence ID" value="NC_011745.1"/>
</dbReference>
<dbReference type="SMR" id="B7N2V8"/>
<dbReference type="KEGG" id="ecq:ECED1_5255"/>
<dbReference type="HOGENOM" id="CLU_068457_2_0_6"/>
<dbReference type="Proteomes" id="UP000000748">
    <property type="component" value="Chromosome"/>
</dbReference>
<dbReference type="GO" id="GO:0005829">
    <property type="term" value="C:cytosol"/>
    <property type="evidence" value="ECO:0007669"/>
    <property type="project" value="TreeGrafter"/>
</dbReference>
<dbReference type="GO" id="GO:0004731">
    <property type="term" value="F:purine-nucleoside phosphorylase activity"/>
    <property type="evidence" value="ECO:0007669"/>
    <property type="project" value="UniProtKB-UniRule"/>
</dbReference>
<dbReference type="GO" id="GO:0006152">
    <property type="term" value="P:purine nucleoside catabolic process"/>
    <property type="evidence" value="ECO:0007669"/>
    <property type="project" value="TreeGrafter"/>
</dbReference>
<dbReference type="CDD" id="cd09006">
    <property type="entry name" value="PNP_EcPNPI-like"/>
    <property type="match status" value="1"/>
</dbReference>
<dbReference type="FunFam" id="3.40.50.1580:FF:000002">
    <property type="entry name" value="Purine nucleoside phosphorylase DeoD-type"/>
    <property type="match status" value="1"/>
</dbReference>
<dbReference type="Gene3D" id="3.40.50.1580">
    <property type="entry name" value="Nucleoside phosphorylase domain"/>
    <property type="match status" value="1"/>
</dbReference>
<dbReference type="HAMAP" id="MF_01627">
    <property type="entry name" value="Pur_nucleosid_phosp"/>
    <property type="match status" value="1"/>
</dbReference>
<dbReference type="InterPro" id="IPR004402">
    <property type="entry name" value="DeoD-type"/>
</dbReference>
<dbReference type="InterPro" id="IPR018016">
    <property type="entry name" value="Nucleoside_phosphorylase_CS"/>
</dbReference>
<dbReference type="InterPro" id="IPR000845">
    <property type="entry name" value="Nucleoside_phosphorylase_d"/>
</dbReference>
<dbReference type="InterPro" id="IPR035994">
    <property type="entry name" value="Nucleoside_phosphorylase_sf"/>
</dbReference>
<dbReference type="NCBIfam" id="TIGR00107">
    <property type="entry name" value="deoD"/>
    <property type="match status" value="1"/>
</dbReference>
<dbReference type="NCBIfam" id="NF004489">
    <property type="entry name" value="PRK05819.1"/>
    <property type="match status" value="1"/>
</dbReference>
<dbReference type="NCBIfam" id="NF009914">
    <property type="entry name" value="PRK13374.1"/>
    <property type="match status" value="1"/>
</dbReference>
<dbReference type="PANTHER" id="PTHR43691:SF2">
    <property type="entry name" value="PURINE NUCLEOSIDE PHOSPHORYLASE DEOD-TYPE"/>
    <property type="match status" value="1"/>
</dbReference>
<dbReference type="PANTHER" id="PTHR43691">
    <property type="entry name" value="URIDINE PHOSPHORYLASE"/>
    <property type="match status" value="1"/>
</dbReference>
<dbReference type="Pfam" id="PF01048">
    <property type="entry name" value="PNP_UDP_1"/>
    <property type="match status" value="1"/>
</dbReference>
<dbReference type="SUPFAM" id="SSF53167">
    <property type="entry name" value="Purine and uridine phosphorylases"/>
    <property type="match status" value="1"/>
</dbReference>
<dbReference type="PROSITE" id="PS01232">
    <property type="entry name" value="PNP_UDP_1"/>
    <property type="match status" value="1"/>
</dbReference>
<protein>
    <recommendedName>
        <fullName evidence="2">Purine nucleoside phosphorylase DeoD-type</fullName>
        <shortName evidence="2">PNP</shortName>
        <ecNumber evidence="2">2.4.2.1</ecNumber>
    </recommendedName>
</protein>
<feature type="chain" id="PRO_1000186189" description="Purine nucleoside phosphorylase DeoD-type">
    <location>
        <begin position="1"/>
        <end position="239"/>
    </location>
</feature>
<feature type="active site" description="Proton donor" evidence="2">
    <location>
        <position position="205"/>
    </location>
</feature>
<feature type="binding site" evidence="1">
    <location>
        <position position="5"/>
    </location>
    <ligand>
        <name>a purine D-ribonucleoside</name>
        <dbReference type="ChEBI" id="CHEBI:142355"/>
        <note>ligand shared between dimeric partners</note>
    </ligand>
</feature>
<feature type="binding site" description="in other chain" evidence="1">
    <location>
        <position position="21"/>
    </location>
    <ligand>
        <name>phosphate</name>
        <dbReference type="ChEBI" id="CHEBI:43474"/>
        <note>ligand shared between dimeric partners</note>
    </ligand>
</feature>
<feature type="binding site" description="in other chain" evidence="1">
    <location>
        <position position="25"/>
    </location>
    <ligand>
        <name>phosphate</name>
        <dbReference type="ChEBI" id="CHEBI:43474"/>
        <note>ligand shared between dimeric partners</note>
    </ligand>
</feature>
<feature type="binding site" evidence="1">
    <location>
        <position position="44"/>
    </location>
    <ligand>
        <name>phosphate</name>
        <dbReference type="ChEBI" id="CHEBI:43474"/>
        <note>ligand shared between dimeric partners</note>
    </ligand>
</feature>
<feature type="binding site" description="in other chain" evidence="1">
    <location>
        <begin position="88"/>
        <end position="91"/>
    </location>
    <ligand>
        <name>phosphate</name>
        <dbReference type="ChEBI" id="CHEBI:43474"/>
        <note>ligand shared between dimeric partners</note>
    </ligand>
</feature>
<feature type="binding site" description="in other chain" evidence="1">
    <location>
        <begin position="180"/>
        <end position="182"/>
    </location>
    <ligand>
        <name>a purine D-ribonucleoside</name>
        <dbReference type="ChEBI" id="CHEBI:142355"/>
        <note>ligand shared between dimeric partners</note>
    </ligand>
</feature>
<feature type="binding site" description="in other chain" evidence="1">
    <location>
        <begin position="204"/>
        <end position="205"/>
    </location>
    <ligand>
        <name>a purine D-ribonucleoside</name>
        <dbReference type="ChEBI" id="CHEBI:142355"/>
        <note>ligand shared between dimeric partners</note>
    </ligand>
</feature>
<feature type="site" description="Important for catalytic activity" evidence="2">
    <location>
        <position position="218"/>
    </location>
</feature>
<feature type="modified residue" description="N6-acetyllysine" evidence="2">
    <location>
        <position position="27"/>
    </location>
</feature>
<keyword id="KW-0007">Acetylation</keyword>
<keyword id="KW-0328">Glycosyltransferase</keyword>
<keyword id="KW-0808">Transferase</keyword>
<sequence length="239" mass="25936">MATPHINAEMGDFADVVLMPGDPLRAKYIAETFLEDAREVNNVRGMLGFTGTYKGRKISVMGHGMGIPSCSIYTKELITDFGVKKIIRVGSCGAVLPHVKLRDVVIGMGACTDSKVNRIRFKDHDFAAIADFDMVRNAVDAAKALGVDARVGNLFSADLFYSPDGEMFDVMEKYGILGVEMEAAGIYGVAAEFGAKALTICTVSDHIRTHEQTTAAERQTTFNDMIKIALESVLLGDKE</sequence>
<proteinExistence type="inferred from homology"/>
<comment type="function">
    <text evidence="2">Catalyzes the reversible phosphorolytic breakdown of the N-glycosidic bond in the beta-(deoxy)ribonucleoside molecules, with the formation of the corresponding free purine bases and pentose-1-phosphate.</text>
</comment>
<comment type="catalytic activity">
    <reaction evidence="2">
        <text>a purine D-ribonucleoside + phosphate = a purine nucleobase + alpha-D-ribose 1-phosphate</text>
        <dbReference type="Rhea" id="RHEA:19805"/>
        <dbReference type="ChEBI" id="CHEBI:26386"/>
        <dbReference type="ChEBI" id="CHEBI:43474"/>
        <dbReference type="ChEBI" id="CHEBI:57720"/>
        <dbReference type="ChEBI" id="CHEBI:142355"/>
        <dbReference type="EC" id="2.4.2.1"/>
    </reaction>
</comment>
<comment type="catalytic activity">
    <reaction evidence="2">
        <text>a purine 2'-deoxy-D-ribonucleoside + phosphate = a purine nucleobase + 2-deoxy-alpha-D-ribose 1-phosphate</text>
        <dbReference type="Rhea" id="RHEA:36431"/>
        <dbReference type="ChEBI" id="CHEBI:26386"/>
        <dbReference type="ChEBI" id="CHEBI:43474"/>
        <dbReference type="ChEBI" id="CHEBI:57259"/>
        <dbReference type="ChEBI" id="CHEBI:142361"/>
        <dbReference type="EC" id="2.4.2.1"/>
    </reaction>
</comment>
<comment type="subunit">
    <text evidence="2">Homohexamer; trimer of homodimers.</text>
</comment>
<comment type="similarity">
    <text evidence="2">Belongs to the PNP/UDP phosphorylase family.</text>
</comment>
<reference key="1">
    <citation type="journal article" date="2009" name="PLoS Genet.">
        <title>Organised genome dynamics in the Escherichia coli species results in highly diverse adaptive paths.</title>
        <authorList>
            <person name="Touchon M."/>
            <person name="Hoede C."/>
            <person name="Tenaillon O."/>
            <person name="Barbe V."/>
            <person name="Baeriswyl S."/>
            <person name="Bidet P."/>
            <person name="Bingen E."/>
            <person name="Bonacorsi S."/>
            <person name="Bouchier C."/>
            <person name="Bouvet O."/>
            <person name="Calteau A."/>
            <person name="Chiapello H."/>
            <person name="Clermont O."/>
            <person name="Cruveiller S."/>
            <person name="Danchin A."/>
            <person name="Diard M."/>
            <person name="Dossat C."/>
            <person name="Karoui M.E."/>
            <person name="Frapy E."/>
            <person name="Garry L."/>
            <person name="Ghigo J.M."/>
            <person name="Gilles A.M."/>
            <person name="Johnson J."/>
            <person name="Le Bouguenec C."/>
            <person name="Lescat M."/>
            <person name="Mangenot S."/>
            <person name="Martinez-Jehanne V."/>
            <person name="Matic I."/>
            <person name="Nassif X."/>
            <person name="Oztas S."/>
            <person name="Petit M.A."/>
            <person name="Pichon C."/>
            <person name="Rouy Z."/>
            <person name="Ruf C.S."/>
            <person name="Schneider D."/>
            <person name="Tourret J."/>
            <person name="Vacherie B."/>
            <person name="Vallenet D."/>
            <person name="Medigue C."/>
            <person name="Rocha E.P.C."/>
            <person name="Denamur E."/>
        </authorList>
    </citation>
    <scope>NUCLEOTIDE SEQUENCE [LARGE SCALE GENOMIC DNA]</scope>
    <source>
        <strain>ED1a</strain>
    </source>
</reference>
<organism>
    <name type="scientific">Escherichia coli O81 (strain ED1a)</name>
    <dbReference type="NCBI Taxonomy" id="585397"/>
    <lineage>
        <taxon>Bacteria</taxon>
        <taxon>Pseudomonadati</taxon>
        <taxon>Pseudomonadota</taxon>
        <taxon>Gammaproteobacteria</taxon>
        <taxon>Enterobacterales</taxon>
        <taxon>Enterobacteriaceae</taxon>
        <taxon>Escherichia</taxon>
    </lineage>
</organism>
<accession>B7N2V8</accession>
<gene>
    <name evidence="2" type="primary">deoD</name>
    <name type="ordered locus">ECED1_5255</name>
</gene>